<keyword id="KW-0030">Aminoacyl-tRNA synthetase</keyword>
<keyword id="KW-0067">ATP-binding</keyword>
<keyword id="KW-0963">Cytoplasm</keyword>
<keyword id="KW-0436">Ligase</keyword>
<keyword id="KW-0460">Magnesium</keyword>
<keyword id="KW-0479">Metal-binding</keyword>
<keyword id="KW-0547">Nucleotide-binding</keyword>
<keyword id="KW-0648">Protein biosynthesis</keyword>
<keyword id="KW-1185">Reference proteome</keyword>
<keyword id="KW-0694">RNA-binding</keyword>
<keyword id="KW-0820">tRNA-binding</keyword>
<accession>Q3Z261</accession>
<evidence type="ECO:0000255" key="1">
    <source>
        <dbReference type="HAMAP-Rule" id="MF_00283"/>
    </source>
</evidence>
<proteinExistence type="inferred from homology"/>
<protein>
    <recommendedName>
        <fullName evidence="1">Phenylalanine--tRNA ligase beta subunit</fullName>
        <ecNumber evidence="1">6.1.1.20</ecNumber>
    </recommendedName>
    <alternativeName>
        <fullName evidence="1">Phenylalanyl-tRNA synthetase beta subunit</fullName>
        <shortName evidence="1">PheRS</shortName>
    </alternativeName>
</protein>
<dbReference type="EC" id="6.1.1.20" evidence="1"/>
<dbReference type="EMBL" id="CP000038">
    <property type="protein sequence ID" value="AAZ88151.1"/>
    <property type="molecule type" value="Genomic_DNA"/>
</dbReference>
<dbReference type="RefSeq" id="WP_000672359.1">
    <property type="nucleotide sequence ID" value="NC_007384.1"/>
</dbReference>
<dbReference type="SMR" id="Q3Z261"/>
<dbReference type="GeneID" id="93775926"/>
<dbReference type="KEGG" id="ssn:SSON_1445"/>
<dbReference type="HOGENOM" id="CLU_016891_0_0_6"/>
<dbReference type="Proteomes" id="UP000002529">
    <property type="component" value="Chromosome"/>
</dbReference>
<dbReference type="GO" id="GO:0009328">
    <property type="term" value="C:phenylalanine-tRNA ligase complex"/>
    <property type="evidence" value="ECO:0007669"/>
    <property type="project" value="TreeGrafter"/>
</dbReference>
<dbReference type="GO" id="GO:0005524">
    <property type="term" value="F:ATP binding"/>
    <property type="evidence" value="ECO:0007669"/>
    <property type="project" value="UniProtKB-UniRule"/>
</dbReference>
<dbReference type="GO" id="GO:0000287">
    <property type="term" value="F:magnesium ion binding"/>
    <property type="evidence" value="ECO:0007669"/>
    <property type="project" value="UniProtKB-UniRule"/>
</dbReference>
<dbReference type="GO" id="GO:0004826">
    <property type="term" value="F:phenylalanine-tRNA ligase activity"/>
    <property type="evidence" value="ECO:0007669"/>
    <property type="project" value="UniProtKB-UniRule"/>
</dbReference>
<dbReference type="GO" id="GO:0000049">
    <property type="term" value="F:tRNA binding"/>
    <property type="evidence" value="ECO:0007669"/>
    <property type="project" value="UniProtKB-KW"/>
</dbReference>
<dbReference type="GO" id="GO:0006432">
    <property type="term" value="P:phenylalanyl-tRNA aminoacylation"/>
    <property type="evidence" value="ECO:0007669"/>
    <property type="project" value="UniProtKB-UniRule"/>
</dbReference>
<dbReference type="CDD" id="cd00769">
    <property type="entry name" value="PheRS_beta_core"/>
    <property type="match status" value="1"/>
</dbReference>
<dbReference type="CDD" id="cd02796">
    <property type="entry name" value="tRNA_bind_bactPheRS"/>
    <property type="match status" value="1"/>
</dbReference>
<dbReference type="FunFam" id="2.40.50.140:FF:000045">
    <property type="entry name" value="Phenylalanine--tRNA ligase beta subunit"/>
    <property type="match status" value="1"/>
</dbReference>
<dbReference type="FunFam" id="3.30.56.10:FF:000002">
    <property type="entry name" value="Phenylalanine--tRNA ligase beta subunit"/>
    <property type="match status" value="1"/>
</dbReference>
<dbReference type="FunFam" id="3.30.70.380:FF:000001">
    <property type="entry name" value="Phenylalanine--tRNA ligase beta subunit"/>
    <property type="match status" value="1"/>
</dbReference>
<dbReference type="FunFam" id="3.30.930.10:FF:000022">
    <property type="entry name" value="Phenylalanine--tRNA ligase beta subunit"/>
    <property type="match status" value="1"/>
</dbReference>
<dbReference type="FunFam" id="3.50.40.10:FF:000001">
    <property type="entry name" value="Phenylalanine--tRNA ligase beta subunit"/>
    <property type="match status" value="1"/>
</dbReference>
<dbReference type="Gene3D" id="3.30.56.10">
    <property type="match status" value="2"/>
</dbReference>
<dbReference type="Gene3D" id="3.30.930.10">
    <property type="entry name" value="Bira Bifunctional Protein, Domain 2"/>
    <property type="match status" value="1"/>
</dbReference>
<dbReference type="Gene3D" id="3.30.70.380">
    <property type="entry name" value="Ferrodoxin-fold anticodon-binding domain"/>
    <property type="match status" value="1"/>
</dbReference>
<dbReference type="Gene3D" id="2.40.50.140">
    <property type="entry name" value="Nucleic acid-binding proteins"/>
    <property type="match status" value="1"/>
</dbReference>
<dbReference type="Gene3D" id="3.50.40.10">
    <property type="entry name" value="Phenylalanyl-trna Synthetase, Chain B, domain 3"/>
    <property type="match status" value="1"/>
</dbReference>
<dbReference type="HAMAP" id="MF_00283">
    <property type="entry name" value="Phe_tRNA_synth_beta1"/>
    <property type="match status" value="1"/>
</dbReference>
<dbReference type="InterPro" id="IPR045864">
    <property type="entry name" value="aa-tRNA-synth_II/BPL/LPL"/>
</dbReference>
<dbReference type="InterPro" id="IPR005146">
    <property type="entry name" value="B3/B4_tRNA-bd"/>
</dbReference>
<dbReference type="InterPro" id="IPR009061">
    <property type="entry name" value="DNA-bd_dom_put_sf"/>
</dbReference>
<dbReference type="InterPro" id="IPR005121">
    <property type="entry name" value="Fdx_antiC-bd"/>
</dbReference>
<dbReference type="InterPro" id="IPR036690">
    <property type="entry name" value="Fdx_antiC-bd_sf"/>
</dbReference>
<dbReference type="InterPro" id="IPR012340">
    <property type="entry name" value="NA-bd_OB-fold"/>
</dbReference>
<dbReference type="InterPro" id="IPR045060">
    <property type="entry name" value="Phe-tRNA-ligase_IIc_bsu"/>
</dbReference>
<dbReference type="InterPro" id="IPR004532">
    <property type="entry name" value="Phe-tRNA-ligase_IIc_bsu_bact"/>
</dbReference>
<dbReference type="InterPro" id="IPR020825">
    <property type="entry name" value="Phe-tRNA_synthase-like_B3/B4"/>
</dbReference>
<dbReference type="InterPro" id="IPR041616">
    <property type="entry name" value="PheRS_beta_core"/>
</dbReference>
<dbReference type="InterPro" id="IPR002547">
    <property type="entry name" value="tRNA-bd_dom"/>
</dbReference>
<dbReference type="InterPro" id="IPR033714">
    <property type="entry name" value="tRNA_bind_bactPheRS"/>
</dbReference>
<dbReference type="InterPro" id="IPR005147">
    <property type="entry name" value="tRNA_synthase_B5-dom"/>
</dbReference>
<dbReference type="NCBIfam" id="TIGR00472">
    <property type="entry name" value="pheT_bact"/>
    <property type="match status" value="1"/>
</dbReference>
<dbReference type="NCBIfam" id="NF045760">
    <property type="entry name" value="YtpR"/>
    <property type="match status" value="1"/>
</dbReference>
<dbReference type="PANTHER" id="PTHR10947:SF0">
    <property type="entry name" value="PHENYLALANINE--TRNA LIGASE BETA SUBUNIT"/>
    <property type="match status" value="1"/>
</dbReference>
<dbReference type="PANTHER" id="PTHR10947">
    <property type="entry name" value="PHENYLALANYL-TRNA SYNTHETASE BETA CHAIN AND LEUCINE-RICH REPEAT-CONTAINING PROTEIN 47"/>
    <property type="match status" value="1"/>
</dbReference>
<dbReference type="Pfam" id="PF03483">
    <property type="entry name" value="B3_4"/>
    <property type="match status" value="1"/>
</dbReference>
<dbReference type="Pfam" id="PF03484">
    <property type="entry name" value="B5"/>
    <property type="match status" value="1"/>
</dbReference>
<dbReference type="Pfam" id="PF03147">
    <property type="entry name" value="FDX-ACB"/>
    <property type="match status" value="1"/>
</dbReference>
<dbReference type="Pfam" id="PF01588">
    <property type="entry name" value="tRNA_bind"/>
    <property type="match status" value="1"/>
</dbReference>
<dbReference type="Pfam" id="PF17759">
    <property type="entry name" value="tRNA_synthFbeta"/>
    <property type="match status" value="1"/>
</dbReference>
<dbReference type="SMART" id="SM00873">
    <property type="entry name" value="B3_4"/>
    <property type="match status" value="1"/>
</dbReference>
<dbReference type="SMART" id="SM00874">
    <property type="entry name" value="B5"/>
    <property type="match status" value="1"/>
</dbReference>
<dbReference type="SMART" id="SM00896">
    <property type="entry name" value="FDX-ACB"/>
    <property type="match status" value="1"/>
</dbReference>
<dbReference type="SUPFAM" id="SSF54991">
    <property type="entry name" value="Anticodon-binding domain of PheRS"/>
    <property type="match status" value="1"/>
</dbReference>
<dbReference type="SUPFAM" id="SSF55681">
    <property type="entry name" value="Class II aaRS and biotin synthetases"/>
    <property type="match status" value="1"/>
</dbReference>
<dbReference type="SUPFAM" id="SSF50249">
    <property type="entry name" value="Nucleic acid-binding proteins"/>
    <property type="match status" value="1"/>
</dbReference>
<dbReference type="SUPFAM" id="SSF56037">
    <property type="entry name" value="PheT/TilS domain"/>
    <property type="match status" value="1"/>
</dbReference>
<dbReference type="SUPFAM" id="SSF46955">
    <property type="entry name" value="Putative DNA-binding domain"/>
    <property type="match status" value="1"/>
</dbReference>
<dbReference type="PROSITE" id="PS51483">
    <property type="entry name" value="B5"/>
    <property type="match status" value="1"/>
</dbReference>
<dbReference type="PROSITE" id="PS51447">
    <property type="entry name" value="FDX_ACB"/>
    <property type="match status" value="1"/>
</dbReference>
<dbReference type="PROSITE" id="PS50886">
    <property type="entry name" value="TRBD"/>
    <property type="match status" value="1"/>
</dbReference>
<comment type="catalytic activity">
    <reaction evidence="1">
        <text>tRNA(Phe) + L-phenylalanine + ATP = L-phenylalanyl-tRNA(Phe) + AMP + diphosphate + H(+)</text>
        <dbReference type="Rhea" id="RHEA:19413"/>
        <dbReference type="Rhea" id="RHEA-COMP:9668"/>
        <dbReference type="Rhea" id="RHEA-COMP:9699"/>
        <dbReference type="ChEBI" id="CHEBI:15378"/>
        <dbReference type="ChEBI" id="CHEBI:30616"/>
        <dbReference type="ChEBI" id="CHEBI:33019"/>
        <dbReference type="ChEBI" id="CHEBI:58095"/>
        <dbReference type="ChEBI" id="CHEBI:78442"/>
        <dbReference type="ChEBI" id="CHEBI:78531"/>
        <dbReference type="ChEBI" id="CHEBI:456215"/>
        <dbReference type="EC" id="6.1.1.20"/>
    </reaction>
</comment>
<comment type="cofactor">
    <cofactor evidence="1">
        <name>Mg(2+)</name>
        <dbReference type="ChEBI" id="CHEBI:18420"/>
    </cofactor>
    <text evidence="1">Binds 2 magnesium ions per tetramer.</text>
</comment>
<comment type="subunit">
    <text evidence="1">Tetramer of two alpha and two beta subunits.</text>
</comment>
<comment type="subcellular location">
    <subcellularLocation>
        <location evidence="1">Cytoplasm</location>
    </subcellularLocation>
</comment>
<comment type="similarity">
    <text evidence="1">Belongs to the phenylalanyl-tRNA synthetase beta subunit family. Type 1 subfamily.</text>
</comment>
<gene>
    <name evidence="1" type="primary">pheT</name>
    <name type="ordered locus">SSON_1445</name>
</gene>
<name>SYFB_SHISS</name>
<feature type="chain" id="PRO_0000232088" description="Phenylalanine--tRNA ligase beta subunit">
    <location>
        <begin position="1"/>
        <end position="795"/>
    </location>
</feature>
<feature type="domain" description="tRNA-binding" evidence="1">
    <location>
        <begin position="39"/>
        <end position="148"/>
    </location>
</feature>
<feature type="domain" description="B5" evidence="1">
    <location>
        <begin position="401"/>
        <end position="476"/>
    </location>
</feature>
<feature type="domain" description="FDX-ACB" evidence="1">
    <location>
        <begin position="701"/>
        <end position="794"/>
    </location>
</feature>
<feature type="binding site" evidence="1">
    <location>
        <position position="454"/>
    </location>
    <ligand>
        <name>Mg(2+)</name>
        <dbReference type="ChEBI" id="CHEBI:18420"/>
        <note>shared with alpha subunit</note>
    </ligand>
</feature>
<feature type="binding site" evidence="1">
    <location>
        <position position="460"/>
    </location>
    <ligand>
        <name>Mg(2+)</name>
        <dbReference type="ChEBI" id="CHEBI:18420"/>
        <note>shared with alpha subunit</note>
    </ligand>
</feature>
<feature type="binding site" evidence="1">
    <location>
        <position position="463"/>
    </location>
    <ligand>
        <name>Mg(2+)</name>
        <dbReference type="ChEBI" id="CHEBI:18420"/>
        <note>shared with alpha subunit</note>
    </ligand>
</feature>
<feature type="binding site" evidence="1">
    <location>
        <position position="464"/>
    </location>
    <ligand>
        <name>Mg(2+)</name>
        <dbReference type="ChEBI" id="CHEBI:18420"/>
        <note>shared with alpha subunit</note>
    </ligand>
</feature>
<sequence length="795" mass="87379">MKFSELWLREWVNPAIDSDALANQITMAGLEVDGVEPVAGSFHGVVVGEVVECAQHPNADKLRVTKVNVGGDRLLDIVCGAPNCRQGLRVAVATIGAVLPGDFKIKAAKLRGEPSEGMLCSFSELGISDDHSGIIELPADAPIGTDIREYLKLDDNTIEISVTPNRADCLGIIGVARDVAVLNQLPLVEPEIVPVGATIDDTLPITVEAPEACPRYLGRVVKGINVKAPTPLWMKEKLRRCGIRSIDAVVDVTNYVLLELGQPMHAFDKDRIEGGIVVRMAKEGETLVLLDGTEAKLNADTLVIADHNKALAMGGIFGGEHSGVNDETQNVLLECAFFSPLSITGRARRHGLHTDASHRYERGVDPALQHKAMERATRLLIDICGGEAGPVIDITNEATLPKRATITLRRSKLDRLIGHHIADEQVTDILRRLGCEVTEGKDEWQAVAPSWRFDMEIEEDLVEEVARVYGYNNIPDEPVQASLIMGTHREADLSLKRVKTLLNDKGYQEVITYSFVDPKVQQMIHPGVEALLLPSPISVEMSAMRLSLWTGLLATVVYNQNRQQNRVRIFESGLRFVPDTQAPLGIRQDLMLAGVICGNRYEEHWNLAKETVDFYDLKGDLESVLDLTGKLNEVEFRAEANPALHPGQSAAIYLKGERIGFVGVVHPELERKLDLNGRTLVFELEWNKLADRVVPQAREISRFPANRRDIAVVVAENVPAADILSECKKVGVNQVVGVNLFDVYRGKGVAEGYKSLAISLILQDTSRTLEEEEIAATVAKCVEALKERFQASLRD</sequence>
<reference key="1">
    <citation type="journal article" date="2005" name="Nucleic Acids Res.">
        <title>Genome dynamics and diversity of Shigella species, the etiologic agents of bacillary dysentery.</title>
        <authorList>
            <person name="Yang F."/>
            <person name="Yang J."/>
            <person name="Zhang X."/>
            <person name="Chen L."/>
            <person name="Jiang Y."/>
            <person name="Yan Y."/>
            <person name="Tang X."/>
            <person name="Wang J."/>
            <person name="Xiong Z."/>
            <person name="Dong J."/>
            <person name="Xue Y."/>
            <person name="Zhu Y."/>
            <person name="Xu X."/>
            <person name="Sun L."/>
            <person name="Chen S."/>
            <person name="Nie H."/>
            <person name="Peng J."/>
            <person name="Xu J."/>
            <person name="Wang Y."/>
            <person name="Yuan Z."/>
            <person name="Wen Y."/>
            <person name="Yao Z."/>
            <person name="Shen Y."/>
            <person name="Qiang B."/>
            <person name="Hou Y."/>
            <person name="Yu J."/>
            <person name="Jin Q."/>
        </authorList>
    </citation>
    <scope>NUCLEOTIDE SEQUENCE [LARGE SCALE GENOMIC DNA]</scope>
    <source>
        <strain>Ss046</strain>
    </source>
</reference>
<organism>
    <name type="scientific">Shigella sonnei (strain Ss046)</name>
    <dbReference type="NCBI Taxonomy" id="300269"/>
    <lineage>
        <taxon>Bacteria</taxon>
        <taxon>Pseudomonadati</taxon>
        <taxon>Pseudomonadota</taxon>
        <taxon>Gammaproteobacteria</taxon>
        <taxon>Enterobacterales</taxon>
        <taxon>Enterobacteriaceae</taxon>
        <taxon>Shigella</taxon>
    </lineage>
</organism>